<comment type="function">
    <text evidence="1">One of two assembly initiator proteins, it binds directly to the 5'-end of the 23S rRNA, where it nucleates assembly of the 50S subunit.</text>
</comment>
<comment type="function">
    <text evidence="1">One of the proteins that surrounds the polypeptide exit tunnel on the outside of the subunit.</text>
</comment>
<comment type="subunit">
    <text evidence="1">Part of the 50S ribosomal subunit.</text>
</comment>
<comment type="similarity">
    <text evidence="1">Belongs to the universal ribosomal protein uL24 family.</text>
</comment>
<feature type="chain" id="PRO_0000130669" description="Large ribosomal subunit protein uL24">
    <location>
        <begin position="1"/>
        <end position="119"/>
    </location>
</feature>
<protein>
    <recommendedName>
        <fullName evidence="1">Large ribosomal subunit protein uL24</fullName>
    </recommendedName>
    <alternativeName>
        <fullName evidence="2">50S ribosomal protein L24</fullName>
    </alternativeName>
</protein>
<gene>
    <name evidence="1" type="primary">rplX</name>
    <name type="ordered locus">LIC_12862</name>
</gene>
<organism>
    <name type="scientific">Leptospira interrogans serogroup Icterohaemorrhagiae serovar copenhageni (strain Fiocruz L1-130)</name>
    <dbReference type="NCBI Taxonomy" id="267671"/>
    <lineage>
        <taxon>Bacteria</taxon>
        <taxon>Pseudomonadati</taxon>
        <taxon>Spirochaetota</taxon>
        <taxon>Spirochaetia</taxon>
        <taxon>Leptospirales</taxon>
        <taxon>Leptospiraceae</taxon>
        <taxon>Leptospira</taxon>
    </lineage>
</organism>
<name>RL24_LEPIC</name>
<reference key="1">
    <citation type="journal article" date="2004" name="J. Bacteriol.">
        <title>Comparative genomics of two Leptospira interrogans serovars reveals novel insights into physiology and pathogenesis.</title>
        <authorList>
            <person name="Nascimento A.L.T.O."/>
            <person name="Ko A.I."/>
            <person name="Martins E.A.L."/>
            <person name="Monteiro-Vitorello C.B."/>
            <person name="Ho P.L."/>
            <person name="Haake D.A."/>
            <person name="Verjovski-Almeida S."/>
            <person name="Hartskeerl R.A."/>
            <person name="Marques M.V."/>
            <person name="Oliveira M.C."/>
            <person name="Menck C.F.M."/>
            <person name="Leite L.C.C."/>
            <person name="Carrer H."/>
            <person name="Coutinho L.L."/>
            <person name="Degrave W.M."/>
            <person name="Dellagostin O.A."/>
            <person name="El-Dorry H."/>
            <person name="Ferro E.S."/>
            <person name="Ferro M.I.T."/>
            <person name="Furlan L.R."/>
            <person name="Gamberini M."/>
            <person name="Giglioti E.A."/>
            <person name="Goes-Neto A."/>
            <person name="Goldman G.H."/>
            <person name="Goldman M.H.S."/>
            <person name="Harakava R."/>
            <person name="Jeronimo S.M.B."/>
            <person name="Junqueira-de-Azevedo I.L.M."/>
            <person name="Kimura E.T."/>
            <person name="Kuramae E.E."/>
            <person name="Lemos E.G.M."/>
            <person name="Lemos M.V.F."/>
            <person name="Marino C.L."/>
            <person name="Nunes L.R."/>
            <person name="de Oliveira R.C."/>
            <person name="Pereira G.G."/>
            <person name="Reis M.S."/>
            <person name="Schriefer A."/>
            <person name="Siqueira W.J."/>
            <person name="Sommer P."/>
            <person name="Tsai S.M."/>
            <person name="Simpson A.J.G."/>
            <person name="Ferro J.A."/>
            <person name="Camargo L.E.A."/>
            <person name="Kitajima J.P."/>
            <person name="Setubal J.C."/>
            <person name="Van Sluys M.A."/>
        </authorList>
    </citation>
    <scope>NUCLEOTIDE SEQUENCE [LARGE SCALE GENOMIC DNA]</scope>
    <source>
        <strain>Fiocruz L1-130</strain>
    </source>
</reference>
<accession>Q72NH2</accession>
<proteinExistence type="inferred from homology"/>
<sequence length="119" mass="13800">MAKLTYRGSEYTKFKKFRIKKNDEVICITGKHKGKRGKVLSIDKKRDRVIVEGLNKRKRFMRPTQENPQGGVIEVEAPIHISNVMFYDPKKKKKAGVRVGFETVKGKKVRVSRPDKKEL</sequence>
<keyword id="KW-0687">Ribonucleoprotein</keyword>
<keyword id="KW-0689">Ribosomal protein</keyword>
<keyword id="KW-0694">RNA-binding</keyword>
<keyword id="KW-0699">rRNA-binding</keyword>
<evidence type="ECO:0000255" key="1">
    <source>
        <dbReference type="HAMAP-Rule" id="MF_01326"/>
    </source>
</evidence>
<evidence type="ECO:0000305" key="2"/>
<dbReference type="EMBL" id="AE016823">
    <property type="protein sequence ID" value="AAS71415.1"/>
    <property type="molecule type" value="Genomic_DNA"/>
</dbReference>
<dbReference type="RefSeq" id="WP_001096782.1">
    <property type="nucleotide sequence ID" value="NC_005823.1"/>
</dbReference>
<dbReference type="SMR" id="Q72NH2"/>
<dbReference type="GeneID" id="61142736"/>
<dbReference type="KEGG" id="lic:LIC_12862"/>
<dbReference type="HOGENOM" id="CLU_093315_2_0_12"/>
<dbReference type="Proteomes" id="UP000007037">
    <property type="component" value="Chromosome I"/>
</dbReference>
<dbReference type="GO" id="GO:1990904">
    <property type="term" value="C:ribonucleoprotein complex"/>
    <property type="evidence" value="ECO:0007669"/>
    <property type="project" value="UniProtKB-KW"/>
</dbReference>
<dbReference type="GO" id="GO:0005840">
    <property type="term" value="C:ribosome"/>
    <property type="evidence" value="ECO:0007669"/>
    <property type="project" value="UniProtKB-KW"/>
</dbReference>
<dbReference type="GO" id="GO:0019843">
    <property type="term" value="F:rRNA binding"/>
    <property type="evidence" value="ECO:0007669"/>
    <property type="project" value="UniProtKB-UniRule"/>
</dbReference>
<dbReference type="GO" id="GO:0003735">
    <property type="term" value="F:structural constituent of ribosome"/>
    <property type="evidence" value="ECO:0007669"/>
    <property type="project" value="InterPro"/>
</dbReference>
<dbReference type="GO" id="GO:0006412">
    <property type="term" value="P:translation"/>
    <property type="evidence" value="ECO:0007669"/>
    <property type="project" value="UniProtKB-UniRule"/>
</dbReference>
<dbReference type="CDD" id="cd06089">
    <property type="entry name" value="KOW_RPL26"/>
    <property type="match status" value="1"/>
</dbReference>
<dbReference type="FunFam" id="2.30.30.30:FF:000042">
    <property type="entry name" value="50S ribosomal protein L24"/>
    <property type="match status" value="1"/>
</dbReference>
<dbReference type="Gene3D" id="2.30.30.30">
    <property type="match status" value="1"/>
</dbReference>
<dbReference type="HAMAP" id="MF_01326_B">
    <property type="entry name" value="Ribosomal_uL24_B"/>
    <property type="match status" value="1"/>
</dbReference>
<dbReference type="InterPro" id="IPR005824">
    <property type="entry name" value="KOW"/>
</dbReference>
<dbReference type="InterPro" id="IPR014722">
    <property type="entry name" value="Rib_uL2_dom2"/>
</dbReference>
<dbReference type="InterPro" id="IPR003256">
    <property type="entry name" value="Ribosomal_uL24"/>
</dbReference>
<dbReference type="InterPro" id="IPR041988">
    <property type="entry name" value="Ribosomal_uL24_KOW"/>
</dbReference>
<dbReference type="InterPro" id="IPR008991">
    <property type="entry name" value="Translation_prot_SH3-like_sf"/>
</dbReference>
<dbReference type="NCBIfam" id="TIGR01079">
    <property type="entry name" value="rplX_bact"/>
    <property type="match status" value="1"/>
</dbReference>
<dbReference type="PANTHER" id="PTHR12903">
    <property type="entry name" value="MITOCHONDRIAL RIBOSOMAL PROTEIN L24"/>
    <property type="match status" value="1"/>
</dbReference>
<dbReference type="Pfam" id="PF00467">
    <property type="entry name" value="KOW"/>
    <property type="match status" value="1"/>
</dbReference>
<dbReference type="Pfam" id="PF17136">
    <property type="entry name" value="ribosomal_L24"/>
    <property type="match status" value="1"/>
</dbReference>
<dbReference type="SMART" id="SM00739">
    <property type="entry name" value="KOW"/>
    <property type="match status" value="1"/>
</dbReference>
<dbReference type="SUPFAM" id="SSF50104">
    <property type="entry name" value="Translation proteins SH3-like domain"/>
    <property type="match status" value="1"/>
</dbReference>